<proteinExistence type="inferred from homology"/>
<feature type="chain" id="PRO_0000355588" description="Globin-like protein 9">
    <location>
        <begin position="1"/>
        <end position="244"/>
    </location>
</feature>
<feature type="domain" description="Globin" evidence="4">
    <location>
        <begin position="47"/>
        <end position="200"/>
    </location>
</feature>
<feature type="region of interest" description="Disordered" evidence="5">
    <location>
        <begin position="1"/>
        <end position="38"/>
    </location>
</feature>
<feature type="binding site" description="distal binding residue" evidence="1">
    <location>
        <position position="111"/>
    </location>
    <ligand>
        <name>heme</name>
        <dbReference type="ChEBI" id="CHEBI:30413"/>
    </ligand>
    <ligandPart>
        <name>Fe</name>
        <dbReference type="ChEBI" id="CHEBI:18248"/>
    </ligandPart>
</feature>
<feature type="binding site" description="proximal binding residue" evidence="1">
    <location>
        <position position="143"/>
    </location>
    <ligand>
        <name>heme</name>
        <dbReference type="ChEBI" id="CHEBI:30413"/>
    </ligand>
    <ligandPart>
        <name>Fe</name>
        <dbReference type="ChEBI" id="CHEBI:18248"/>
    </ligandPart>
</feature>
<protein>
    <recommendedName>
        <fullName>Globin-like protein 9</fullName>
    </recommendedName>
</protein>
<organism>
    <name type="scientific">Caenorhabditis briggsae</name>
    <dbReference type="NCBI Taxonomy" id="6238"/>
    <lineage>
        <taxon>Eukaryota</taxon>
        <taxon>Metazoa</taxon>
        <taxon>Ecdysozoa</taxon>
        <taxon>Nematoda</taxon>
        <taxon>Chromadorea</taxon>
        <taxon>Rhabditida</taxon>
        <taxon>Rhabditina</taxon>
        <taxon>Rhabditomorpha</taxon>
        <taxon>Rhabditoidea</taxon>
        <taxon>Rhabditidae</taxon>
        <taxon>Peloderinae</taxon>
        <taxon>Caenorhabditis</taxon>
    </lineage>
</organism>
<dbReference type="EMBL" id="HE600938">
    <property type="protein sequence ID" value="CAP31910.1"/>
    <property type="molecule type" value="Genomic_DNA"/>
</dbReference>
<dbReference type="SMR" id="A8XGY6"/>
<dbReference type="FunCoup" id="A8XGY6">
    <property type="interactions" value="217"/>
</dbReference>
<dbReference type="STRING" id="6238.A8XGY6"/>
<dbReference type="EnsemblMetazoa" id="CBG13047a.1">
    <property type="protein sequence ID" value="CBG13047a.1"/>
    <property type="gene ID" value="WBGene00033880"/>
</dbReference>
<dbReference type="KEGG" id="cbr:CBG_13047"/>
<dbReference type="CTD" id="8572105"/>
<dbReference type="WormBase" id="CBG13047a">
    <property type="protein sequence ID" value="CBP09240"/>
    <property type="gene ID" value="WBGene00033880"/>
    <property type="gene designation" value="Cbr-glb-9"/>
</dbReference>
<dbReference type="eggNOG" id="KOG3378">
    <property type="taxonomic scope" value="Eukaryota"/>
</dbReference>
<dbReference type="HOGENOM" id="CLU_1246321_0_0_1"/>
<dbReference type="InParanoid" id="A8XGY6"/>
<dbReference type="OMA" id="FSSDIWE"/>
<dbReference type="Proteomes" id="UP000008549">
    <property type="component" value="Unassembled WGS sequence"/>
</dbReference>
<dbReference type="GO" id="GO:0020037">
    <property type="term" value="F:heme binding"/>
    <property type="evidence" value="ECO:0007669"/>
    <property type="project" value="InterPro"/>
</dbReference>
<dbReference type="GO" id="GO:0046872">
    <property type="term" value="F:metal ion binding"/>
    <property type="evidence" value="ECO:0007669"/>
    <property type="project" value="UniProtKB-KW"/>
</dbReference>
<dbReference type="GO" id="GO:0019825">
    <property type="term" value="F:oxygen binding"/>
    <property type="evidence" value="ECO:0000318"/>
    <property type="project" value="GO_Central"/>
</dbReference>
<dbReference type="GO" id="GO:0005344">
    <property type="term" value="F:oxygen carrier activity"/>
    <property type="evidence" value="ECO:0000318"/>
    <property type="project" value="GO_Central"/>
</dbReference>
<dbReference type="GO" id="GO:0015671">
    <property type="term" value="P:oxygen transport"/>
    <property type="evidence" value="ECO:0000318"/>
    <property type="project" value="GO_Central"/>
</dbReference>
<dbReference type="GO" id="GO:0001666">
    <property type="term" value="P:response to hypoxia"/>
    <property type="evidence" value="ECO:0000318"/>
    <property type="project" value="GO_Central"/>
</dbReference>
<dbReference type="CDD" id="cd01040">
    <property type="entry name" value="Mb-like"/>
    <property type="match status" value="1"/>
</dbReference>
<dbReference type="Gene3D" id="1.10.490.10">
    <property type="entry name" value="Globins"/>
    <property type="match status" value="1"/>
</dbReference>
<dbReference type="InterPro" id="IPR000971">
    <property type="entry name" value="Globin"/>
</dbReference>
<dbReference type="InterPro" id="IPR050532">
    <property type="entry name" value="Globin-like_OT"/>
</dbReference>
<dbReference type="InterPro" id="IPR009050">
    <property type="entry name" value="Globin-like_sf"/>
</dbReference>
<dbReference type="InterPro" id="IPR012292">
    <property type="entry name" value="Globin/Proto"/>
</dbReference>
<dbReference type="InterPro" id="IPR044399">
    <property type="entry name" value="Mb-like_M"/>
</dbReference>
<dbReference type="PANTHER" id="PTHR46458">
    <property type="entry name" value="BLR2807 PROTEIN"/>
    <property type="match status" value="1"/>
</dbReference>
<dbReference type="PANTHER" id="PTHR46458:SF11">
    <property type="entry name" value="GLOBIN-LIKE PROTEIN 9"/>
    <property type="match status" value="1"/>
</dbReference>
<dbReference type="Pfam" id="PF00042">
    <property type="entry name" value="Globin"/>
    <property type="match status" value="1"/>
</dbReference>
<dbReference type="SUPFAM" id="SSF46458">
    <property type="entry name" value="Globin-like"/>
    <property type="match status" value="1"/>
</dbReference>
<dbReference type="PROSITE" id="PS01033">
    <property type="entry name" value="GLOBIN"/>
    <property type="match status" value="1"/>
</dbReference>
<accession>A8XGY6</accession>
<evidence type="ECO:0000250" key="1">
    <source>
        <dbReference type="UniProtKB" id="P02208"/>
    </source>
</evidence>
<evidence type="ECO:0000250" key="2">
    <source>
        <dbReference type="UniProtKB" id="Q09240"/>
    </source>
</evidence>
<evidence type="ECO:0000255" key="3"/>
<evidence type="ECO:0000255" key="4">
    <source>
        <dbReference type="PROSITE-ProRule" id="PRU00238"/>
    </source>
</evidence>
<evidence type="ECO:0000256" key="5">
    <source>
        <dbReference type="SAM" id="MobiDB-lite"/>
    </source>
</evidence>
<evidence type="ECO:0000312" key="6">
    <source>
        <dbReference type="EMBL" id="CAP31910.1"/>
    </source>
</evidence>
<keyword id="KW-0349">Heme</keyword>
<keyword id="KW-0408">Iron</keyword>
<keyword id="KW-0479">Metal-binding</keyword>
<keyword id="KW-0561">Oxygen transport</keyword>
<keyword id="KW-1185">Reference proteome</keyword>
<keyword id="KW-0813">Transport</keyword>
<reference evidence="6" key="1">
    <citation type="journal article" date="2003" name="PLoS Biol.">
        <title>The genome sequence of Caenorhabditis briggsae: a platform for comparative genomics.</title>
        <authorList>
            <person name="Stein L.D."/>
            <person name="Bao Z."/>
            <person name="Blasiar D."/>
            <person name="Blumenthal T."/>
            <person name="Brent M.R."/>
            <person name="Chen N."/>
            <person name="Chinwalla A."/>
            <person name="Clarke L."/>
            <person name="Clee C."/>
            <person name="Coghlan A."/>
            <person name="Coulson A."/>
            <person name="D'Eustachio P."/>
            <person name="Fitch D.H.A."/>
            <person name="Fulton L.A."/>
            <person name="Fulton R.E."/>
            <person name="Griffiths-Jones S."/>
            <person name="Harris T.W."/>
            <person name="Hillier L.W."/>
            <person name="Kamath R."/>
            <person name="Kuwabara P.E."/>
            <person name="Mardis E.R."/>
            <person name="Marra M.A."/>
            <person name="Miner T.L."/>
            <person name="Minx P."/>
            <person name="Mullikin J.C."/>
            <person name="Plumb R.W."/>
            <person name="Rogers J."/>
            <person name="Schein J.E."/>
            <person name="Sohrmann M."/>
            <person name="Spieth J."/>
            <person name="Stajich J.E."/>
            <person name="Wei C."/>
            <person name="Willey D."/>
            <person name="Wilson R.K."/>
            <person name="Durbin R.M."/>
            <person name="Waterston R.H."/>
        </authorList>
    </citation>
    <scope>NUCLEOTIDE SEQUENCE [LARGE SCALE GENOMIC DNA]</scope>
    <source>
        <strain evidence="6">AF16</strain>
    </source>
</reference>
<gene>
    <name evidence="2" type="primary">glb-9</name>
    <name type="ORF">CBG13047</name>
</gene>
<sequence length="244" mass="27774">MRRMAKYDRSYSMQDAHGPNGLARRGTQRGCSRSKSTRRGNLGTIASLTFSQKQALNLSWRLLKPQASACFRKIFLELEIASPKVKQIFYKAALVDAFNKDDDNTATLEVHIKLTTKFFDELLATLDDENEFVAKIRGIGSAHAILAKGSNFSSDIWERLGEIAMERVCSHEVVTKTREASRAWRTLIAILIDELRGGFEGELRQHRKSSSTDQIEMGKVEDEEELHSKLQQLRMDYNQTLPYT</sequence>
<comment type="similarity">
    <text evidence="3">Belongs to the globin family.</text>
</comment>
<name>GLOB9_CAEBR</name>